<protein>
    <recommendedName>
        <fullName evidence="1">Protein RecA</fullName>
    </recommendedName>
    <alternativeName>
        <fullName evidence="1">Recombinase A</fullName>
    </alternativeName>
</protein>
<sequence>MDAPIKAPTALNTEKARALAVALAQIEKQFGKGTIMKLGAGEVIEDIQVVSTGSLGLDIALGVGGLPRGRVVEIYGPESSGKTTLTLQVIAEMQKIGGTCAFVDAEHALDIQYAQKLGVNLQELLISQPDTGEQALEIVDSLTRSGAVDLIVIDSVAALTPKAELEGEMGDSLPGLQARLMSQALRKLTATIKKANCMVIFINQIRMKIGVMFGSPETTTGGNALKFYASVRLDIRRIGSIKKGDEVIGNETRVKVVKNKVASPFKMAEFDILYGEGISRLGEVLDLGVANHVVEKAGAWYAYRGEKIGQGRDNSREFLKENPALAIEIENKVREALGIPLVQAAQGSAEPEKAAKPEKVEKADKPVKAVVDKTLAAPLAPVAS</sequence>
<gene>
    <name evidence="1" type="primary">recA</name>
    <name type="ordered locus">Pnap_3956</name>
</gene>
<reference key="1">
    <citation type="journal article" date="2009" name="Environ. Microbiol.">
        <title>The genome of Polaromonas naphthalenivorans strain CJ2, isolated from coal tar-contaminated sediment, reveals physiological and metabolic versatility and evolution through extensive horizontal gene transfer.</title>
        <authorList>
            <person name="Yagi J.M."/>
            <person name="Sims D."/>
            <person name="Brettin T."/>
            <person name="Bruce D."/>
            <person name="Madsen E.L."/>
        </authorList>
    </citation>
    <scope>NUCLEOTIDE SEQUENCE [LARGE SCALE GENOMIC DNA]</scope>
    <source>
        <strain>CJ2</strain>
    </source>
</reference>
<feature type="chain" id="PRO_1000193321" description="Protein RecA">
    <location>
        <begin position="1"/>
        <end position="384"/>
    </location>
</feature>
<feature type="region of interest" description="Disordered" evidence="2">
    <location>
        <begin position="346"/>
        <end position="365"/>
    </location>
</feature>
<feature type="compositionally biased region" description="Basic and acidic residues" evidence="2">
    <location>
        <begin position="350"/>
        <end position="365"/>
    </location>
</feature>
<feature type="binding site" evidence="1">
    <location>
        <begin position="76"/>
        <end position="83"/>
    </location>
    <ligand>
        <name>ATP</name>
        <dbReference type="ChEBI" id="CHEBI:30616"/>
    </ligand>
</feature>
<dbReference type="EMBL" id="CP000529">
    <property type="protein sequence ID" value="ABM39251.1"/>
    <property type="molecule type" value="Genomic_DNA"/>
</dbReference>
<dbReference type="RefSeq" id="WP_011803317.1">
    <property type="nucleotide sequence ID" value="NC_008781.1"/>
</dbReference>
<dbReference type="SMR" id="A1VUC3"/>
<dbReference type="STRING" id="365044.Pnap_3956"/>
<dbReference type="KEGG" id="pna:Pnap_3956"/>
<dbReference type="eggNOG" id="COG0468">
    <property type="taxonomic scope" value="Bacteria"/>
</dbReference>
<dbReference type="HOGENOM" id="CLU_040469_3_2_4"/>
<dbReference type="OrthoDB" id="9776733at2"/>
<dbReference type="Proteomes" id="UP000000644">
    <property type="component" value="Chromosome"/>
</dbReference>
<dbReference type="GO" id="GO:0005829">
    <property type="term" value="C:cytosol"/>
    <property type="evidence" value="ECO:0007669"/>
    <property type="project" value="TreeGrafter"/>
</dbReference>
<dbReference type="GO" id="GO:0005524">
    <property type="term" value="F:ATP binding"/>
    <property type="evidence" value="ECO:0007669"/>
    <property type="project" value="UniProtKB-UniRule"/>
</dbReference>
<dbReference type="GO" id="GO:0016887">
    <property type="term" value="F:ATP hydrolysis activity"/>
    <property type="evidence" value="ECO:0007669"/>
    <property type="project" value="InterPro"/>
</dbReference>
<dbReference type="GO" id="GO:0140664">
    <property type="term" value="F:ATP-dependent DNA damage sensor activity"/>
    <property type="evidence" value="ECO:0007669"/>
    <property type="project" value="InterPro"/>
</dbReference>
<dbReference type="GO" id="GO:0003684">
    <property type="term" value="F:damaged DNA binding"/>
    <property type="evidence" value="ECO:0007669"/>
    <property type="project" value="UniProtKB-UniRule"/>
</dbReference>
<dbReference type="GO" id="GO:0003697">
    <property type="term" value="F:single-stranded DNA binding"/>
    <property type="evidence" value="ECO:0007669"/>
    <property type="project" value="UniProtKB-UniRule"/>
</dbReference>
<dbReference type="GO" id="GO:0006310">
    <property type="term" value="P:DNA recombination"/>
    <property type="evidence" value="ECO:0007669"/>
    <property type="project" value="UniProtKB-UniRule"/>
</dbReference>
<dbReference type="GO" id="GO:0006281">
    <property type="term" value="P:DNA repair"/>
    <property type="evidence" value="ECO:0007669"/>
    <property type="project" value="UniProtKB-UniRule"/>
</dbReference>
<dbReference type="GO" id="GO:0009432">
    <property type="term" value="P:SOS response"/>
    <property type="evidence" value="ECO:0007669"/>
    <property type="project" value="UniProtKB-UniRule"/>
</dbReference>
<dbReference type="CDD" id="cd00983">
    <property type="entry name" value="RecA"/>
    <property type="match status" value="1"/>
</dbReference>
<dbReference type="FunFam" id="3.40.50.300:FF:000087">
    <property type="entry name" value="Recombinase RecA"/>
    <property type="match status" value="1"/>
</dbReference>
<dbReference type="Gene3D" id="3.40.50.300">
    <property type="entry name" value="P-loop containing nucleotide triphosphate hydrolases"/>
    <property type="match status" value="1"/>
</dbReference>
<dbReference type="HAMAP" id="MF_00268">
    <property type="entry name" value="RecA"/>
    <property type="match status" value="1"/>
</dbReference>
<dbReference type="InterPro" id="IPR003593">
    <property type="entry name" value="AAA+_ATPase"/>
</dbReference>
<dbReference type="InterPro" id="IPR013765">
    <property type="entry name" value="DNA_recomb/repair_RecA"/>
</dbReference>
<dbReference type="InterPro" id="IPR020584">
    <property type="entry name" value="DNA_recomb/repair_RecA_CS"/>
</dbReference>
<dbReference type="InterPro" id="IPR027417">
    <property type="entry name" value="P-loop_NTPase"/>
</dbReference>
<dbReference type="InterPro" id="IPR049261">
    <property type="entry name" value="RecA-like_C"/>
</dbReference>
<dbReference type="InterPro" id="IPR049428">
    <property type="entry name" value="RecA-like_N"/>
</dbReference>
<dbReference type="InterPro" id="IPR020588">
    <property type="entry name" value="RecA_ATP-bd"/>
</dbReference>
<dbReference type="InterPro" id="IPR023400">
    <property type="entry name" value="RecA_C_sf"/>
</dbReference>
<dbReference type="InterPro" id="IPR020587">
    <property type="entry name" value="RecA_monomer-monomer_interface"/>
</dbReference>
<dbReference type="NCBIfam" id="TIGR02012">
    <property type="entry name" value="tigrfam_recA"/>
    <property type="match status" value="1"/>
</dbReference>
<dbReference type="PANTHER" id="PTHR45900:SF1">
    <property type="entry name" value="MITOCHONDRIAL DNA REPAIR PROTEIN RECA HOMOLOG-RELATED"/>
    <property type="match status" value="1"/>
</dbReference>
<dbReference type="PANTHER" id="PTHR45900">
    <property type="entry name" value="RECA"/>
    <property type="match status" value="1"/>
</dbReference>
<dbReference type="Pfam" id="PF00154">
    <property type="entry name" value="RecA"/>
    <property type="match status" value="1"/>
</dbReference>
<dbReference type="Pfam" id="PF21096">
    <property type="entry name" value="RecA_C"/>
    <property type="match status" value="1"/>
</dbReference>
<dbReference type="PRINTS" id="PR00142">
    <property type="entry name" value="RECA"/>
</dbReference>
<dbReference type="SMART" id="SM00382">
    <property type="entry name" value="AAA"/>
    <property type="match status" value="1"/>
</dbReference>
<dbReference type="SUPFAM" id="SSF52540">
    <property type="entry name" value="P-loop containing nucleoside triphosphate hydrolases"/>
    <property type="match status" value="1"/>
</dbReference>
<dbReference type="SUPFAM" id="SSF54752">
    <property type="entry name" value="RecA protein, C-terminal domain"/>
    <property type="match status" value="1"/>
</dbReference>
<dbReference type="PROSITE" id="PS00321">
    <property type="entry name" value="RECA_1"/>
    <property type="match status" value="1"/>
</dbReference>
<dbReference type="PROSITE" id="PS50162">
    <property type="entry name" value="RECA_2"/>
    <property type="match status" value="1"/>
</dbReference>
<dbReference type="PROSITE" id="PS50163">
    <property type="entry name" value="RECA_3"/>
    <property type="match status" value="1"/>
</dbReference>
<proteinExistence type="inferred from homology"/>
<keyword id="KW-0067">ATP-binding</keyword>
<keyword id="KW-0963">Cytoplasm</keyword>
<keyword id="KW-0227">DNA damage</keyword>
<keyword id="KW-0233">DNA recombination</keyword>
<keyword id="KW-0234">DNA repair</keyword>
<keyword id="KW-0238">DNA-binding</keyword>
<keyword id="KW-0547">Nucleotide-binding</keyword>
<keyword id="KW-1185">Reference proteome</keyword>
<keyword id="KW-0742">SOS response</keyword>
<name>RECA_POLNA</name>
<comment type="function">
    <text evidence="1">Can catalyze the hydrolysis of ATP in the presence of single-stranded DNA, the ATP-dependent uptake of single-stranded DNA by duplex DNA, and the ATP-dependent hybridization of homologous single-stranded DNAs. It interacts with LexA causing its activation and leading to its autocatalytic cleavage.</text>
</comment>
<comment type="subcellular location">
    <subcellularLocation>
        <location evidence="1">Cytoplasm</location>
    </subcellularLocation>
</comment>
<comment type="similarity">
    <text evidence="1">Belongs to the RecA family.</text>
</comment>
<evidence type="ECO:0000255" key="1">
    <source>
        <dbReference type="HAMAP-Rule" id="MF_00268"/>
    </source>
</evidence>
<evidence type="ECO:0000256" key="2">
    <source>
        <dbReference type="SAM" id="MobiDB-lite"/>
    </source>
</evidence>
<organism>
    <name type="scientific">Polaromonas naphthalenivorans (strain CJ2)</name>
    <dbReference type="NCBI Taxonomy" id="365044"/>
    <lineage>
        <taxon>Bacteria</taxon>
        <taxon>Pseudomonadati</taxon>
        <taxon>Pseudomonadota</taxon>
        <taxon>Betaproteobacteria</taxon>
        <taxon>Burkholderiales</taxon>
        <taxon>Comamonadaceae</taxon>
        <taxon>Polaromonas</taxon>
    </lineage>
</organism>
<accession>A1VUC3</accession>